<sequence>MVQITLPDGSQRQFPGPVTVAEVAQSIGTGLAKAALGGRVTEPGGEPRLVDTSYRLEHDAQLAIVTAKDADGLDMIRHSTAHLLAYAVKELFPDAQVTIGPVIDNGFYYDFSYKRPFTPEDLAAIEKKMTELARKDETVTREEWTRDDAVAYFKSIGEDYKAEIIASIPANETLSLYREGNFVDLCRGPHVPSTGKLKVFKLMKVAGAYWRGDSNNEMLQRIYGTAWATKDDQDAYLHMLEEAERRDHRKIGRDLDLFHFQDEAPGLIFWHPKGWALWQQVEQYMRAVYNDNGYQEVKAPQILDLSLWKKTGHWDNYRENMFTTESENRVYGLKPMNCPGHVQIFNAGLHSYRELPLRYGEFGQCHRNEPSGSLHGMMRVRGFTQDDGHIFCTEDQLQDECADFTALLQKVYRDFGFHEVLYKVATRPEKRIGSDDIWDKAETALMESLRRTGCEFEISPGEGAFYGPKIEYTLKDAIGRHWQCGTVQVDFSMPVRLGAEYVDAQDQRRAPVMLHRAILGSLERFIGMLIENHAGAMPPWLAPVQAVVCCISEPSADYAAQITQTLKKQGFRVQSDLRGEKITRKIREHSLQKVPYILVVGDKEKQNGTVAVRGLGGLDLGVIALEDFAARLAEDVAARRDVVQPESSAN</sequence>
<reference key="1">
    <citation type="journal article" date="2008" name="BMC Genomics">
        <title>The missing link: Bordetella petrii is endowed with both the metabolic versatility of environmental bacteria and virulence traits of pathogenic Bordetellae.</title>
        <authorList>
            <person name="Gross R."/>
            <person name="Guzman C.A."/>
            <person name="Sebaihia M."/>
            <person name="Martin dos Santos V.A.P."/>
            <person name="Pieper D.H."/>
            <person name="Koebnik R."/>
            <person name="Lechner M."/>
            <person name="Bartels D."/>
            <person name="Buhrmester J."/>
            <person name="Choudhuri J.V."/>
            <person name="Ebensen T."/>
            <person name="Gaigalat L."/>
            <person name="Herrmann S."/>
            <person name="Khachane A.N."/>
            <person name="Larisch C."/>
            <person name="Link S."/>
            <person name="Linke B."/>
            <person name="Meyer F."/>
            <person name="Mormann S."/>
            <person name="Nakunst D."/>
            <person name="Rueckert C."/>
            <person name="Schneiker-Bekel S."/>
            <person name="Schulze K."/>
            <person name="Voerholter F.-J."/>
            <person name="Yevsa T."/>
            <person name="Engle J.T."/>
            <person name="Goldman W.E."/>
            <person name="Puehler A."/>
            <person name="Goebel U.B."/>
            <person name="Goesmann A."/>
            <person name="Bloecker H."/>
            <person name="Kaiser O."/>
            <person name="Martinez-Arias R."/>
        </authorList>
    </citation>
    <scope>NUCLEOTIDE SEQUENCE [LARGE SCALE GENOMIC DNA]</scope>
    <source>
        <strain>ATCC BAA-461 / DSM 12804 / CCUG 43448</strain>
    </source>
</reference>
<protein>
    <recommendedName>
        <fullName evidence="1">Threonine--tRNA ligase</fullName>
        <ecNumber evidence="1">6.1.1.3</ecNumber>
    </recommendedName>
    <alternativeName>
        <fullName evidence="1">Threonyl-tRNA synthetase</fullName>
        <shortName evidence="1">ThrRS</shortName>
    </alternativeName>
</protein>
<comment type="function">
    <text evidence="1">Catalyzes the attachment of threonine to tRNA(Thr) in a two-step reaction: L-threonine is first activated by ATP to form Thr-AMP and then transferred to the acceptor end of tRNA(Thr). Also edits incorrectly charged L-seryl-tRNA(Thr).</text>
</comment>
<comment type="catalytic activity">
    <reaction evidence="1">
        <text>tRNA(Thr) + L-threonine + ATP = L-threonyl-tRNA(Thr) + AMP + diphosphate + H(+)</text>
        <dbReference type="Rhea" id="RHEA:24624"/>
        <dbReference type="Rhea" id="RHEA-COMP:9670"/>
        <dbReference type="Rhea" id="RHEA-COMP:9704"/>
        <dbReference type="ChEBI" id="CHEBI:15378"/>
        <dbReference type="ChEBI" id="CHEBI:30616"/>
        <dbReference type="ChEBI" id="CHEBI:33019"/>
        <dbReference type="ChEBI" id="CHEBI:57926"/>
        <dbReference type="ChEBI" id="CHEBI:78442"/>
        <dbReference type="ChEBI" id="CHEBI:78534"/>
        <dbReference type="ChEBI" id="CHEBI:456215"/>
        <dbReference type="EC" id="6.1.1.3"/>
    </reaction>
</comment>
<comment type="cofactor">
    <cofactor evidence="1">
        <name>Zn(2+)</name>
        <dbReference type="ChEBI" id="CHEBI:29105"/>
    </cofactor>
    <text evidence="1">Binds 1 zinc ion per subunit.</text>
</comment>
<comment type="subunit">
    <text evidence="1">Homodimer.</text>
</comment>
<comment type="subcellular location">
    <subcellularLocation>
        <location evidence="1">Cytoplasm</location>
    </subcellularLocation>
</comment>
<comment type="similarity">
    <text evidence="1">Belongs to the class-II aminoacyl-tRNA synthetase family.</text>
</comment>
<organism>
    <name type="scientific">Bordetella petrii (strain ATCC BAA-461 / DSM 12804 / CCUG 43448)</name>
    <dbReference type="NCBI Taxonomy" id="340100"/>
    <lineage>
        <taxon>Bacteria</taxon>
        <taxon>Pseudomonadati</taxon>
        <taxon>Pseudomonadota</taxon>
        <taxon>Betaproteobacteria</taxon>
        <taxon>Burkholderiales</taxon>
        <taxon>Alcaligenaceae</taxon>
        <taxon>Bordetella</taxon>
    </lineage>
</organism>
<gene>
    <name evidence="1" type="primary">thrS</name>
    <name type="ordered locus">Bpet2834</name>
</gene>
<dbReference type="EC" id="6.1.1.3" evidence="1"/>
<dbReference type="EMBL" id="AM902716">
    <property type="protein sequence ID" value="CAP43176.1"/>
    <property type="molecule type" value="Genomic_DNA"/>
</dbReference>
<dbReference type="SMR" id="A9IRH6"/>
<dbReference type="STRING" id="94624.Bpet2834"/>
<dbReference type="KEGG" id="bpt:Bpet2834"/>
<dbReference type="eggNOG" id="COG0441">
    <property type="taxonomic scope" value="Bacteria"/>
</dbReference>
<dbReference type="Proteomes" id="UP000001225">
    <property type="component" value="Chromosome"/>
</dbReference>
<dbReference type="GO" id="GO:0005737">
    <property type="term" value="C:cytoplasm"/>
    <property type="evidence" value="ECO:0007669"/>
    <property type="project" value="UniProtKB-SubCell"/>
</dbReference>
<dbReference type="GO" id="GO:0005524">
    <property type="term" value="F:ATP binding"/>
    <property type="evidence" value="ECO:0007669"/>
    <property type="project" value="UniProtKB-UniRule"/>
</dbReference>
<dbReference type="GO" id="GO:0046872">
    <property type="term" value="F:metal ion binding"/>
    <property type="evidence" value="ECO:0007669"/>
    <property type="project" value="UniProtKB-KW"/>
</dbReference>
<dbReference type="GO" id="GO:0004829">
    <property type="term" value="F:threonine-tRNA ligase activity"/>
    <property type="evidence" value="ECO:0007669"/>
    <property type="project" value="UniProtKB-UniRule"/>
</dbReference>
<dbReference type="GO" id="GO:0000049">
    <property type="term" value="F:tRNA binding"/>
    <property type="evidence" value="ECO:0007669"/>
    <property type="project" value="UniProtKB-KW"/>
</dbReference>
<dbReference type="GO" id="GO:0006435">
    <property type="term" value="P:threonyl-tRNA aminoacylation"/>
    <property type="evidence" value="ECO:0007669"/>
    <property type="project" value="UniProtKB-UniRule"/>
</dbReference>
<dbReference type="CDD" id="cd01667">
    <property type="entry name" value="TGS_ThrRS"/>
    <property type="match status" value="1"/>
</dbReference>
<dbReference type="CDD" id="cd00860">
    <property type="entry name" value="ThrRS_anticodon"/>
    <property type="match status" value="1"/>
</dbReference>
<dbReference type="CDD" id="cd00771">
    <property type="entry name" value="ThrRS_core"/>
    <property type="match status" value="1"/>
</dbReference>
<dbReference type="FunFam" id="3.10.20.30:FF:000005">
    <property type="entry name" value="Threonine--tRNA ligase"/>
    <property type="match status" value="1"/>
</dbReference>
<dbReference type="FunFam" id="3.30.54.20:FF:000002">
    <property type="entry name" value="Threonine--tRNA ligase"/>
    <property type="match status" value="1"/>
</dbReference>
<dbReference type="FunFam" id="3.30.930.10:FF:000002">
    <property type="entry name" value="Threonine--tRNA ligase"/>
    <property type="match status" value="1"/>
</dbReference>
<dbReference type="FunFam" id="3.40.50.800:FF:000001">
    <property type="entry name" value="Threonine--tRNA ligase"/>
    <property type="match status" value="1"/>
</dbReference>
<dbReference type="FunFam" id="3.30.980.10:FF:000005">
    <property type="entry name" value="Threonyl-tRNA synthetase, mitochondrial"/>
    <property type="match status" value="1"/>
</dbReference>
<dbReference type="Gene3D" id="3.10.20.30">
    <property type="match status" value="1"/>
</dbReference>
<dbReference type="Gene3D" id="3.30.54.20">
    <property type="match status" value="1"/>
</dbReference>
<dbReference type="Gene3D" id="3.40.50.800">
    <property type="entry name" value="Anticodon-binding domain"/>
    <property type="match status" value="1"/>
</dbReference>
<dbReference type="Gene3D" id="3.30.930.10">
    <property type="entry name" value="Bira Bifunctional Protein, Domain 2"/>
    <property type="match status" value="1"/>
</dbReference>
<dbReference type="Gene3D" id="3.30.980.10">
    <property type="entry name" value="Threonyl-trna Synthetase, Chain A, domain 2"/>
    <property type="match status" value="1"/>
</dbReference>
<dbReference type="HAMAP" id="MF_00184">
    <property type="entry name" value="Thr_tRNA_synth"/>
    <property type="match status" value="1"/>
</dbReference>
<dbReference type="InterPro" id="IPR002314">
    <property type="entry name" value="aa-tRNA-synt_IIb"/>
</dbReference>
<dbReference type="InterPro" id="IPR006195">
    <property type="entry name" value="aa-tRNA-synth_II"/>
</dbReference>
<dbReference type="InterPro" id="IPR045864">
    <property type="entry name" value="aa-tRNA-synth_II/BPL/LPL"/>
</dbReference>
<dbReference type="InterPro" id="IPR004154">
    <property type="entry name" value="Anticodon-bd"/>
</dbReference>
<dbReference type="InterPro" id="IPR036621">
    <property type="entry name" value="Anticodon-bd_dom_sf"/>
</dbReference>
<dbReference type="InterPro" id="IPR012675">
    <property type="entry name" value="Beta-grasp_dom_sf"/>
</dbReference>
<dbReference type="InterPro" id="IPR004095">
    <property type="entry name" value="TGS"/>
</dbReference>
<dbReference type="InterPro" id="IPR012676">
    <property type="entry name" value="TGS-like"/>
</dbReference>
<dbReference type="InterPro" id="IPR002320">
    <property type="entry name" value="Thr-tRNA-ligase_IIa"/>
</dbReference>
<dbReference type="InterPro" id="IPR018163">
    <property type="entry name" value="Thr/Ala-tRNA-synth_IIc_edit"/>
</dbReference>
<dbReference type="InterPro" id="IPR047246">
    <property type="entry name" value="ThrRS_anticodon"/>
</dbReference>
<dbReference type="InterPro" id="IPR033728">
    <property type="entry name" value="ThrRS_core"/>
</dbReference>
<dbReference type="InterPro" id="IPR012947">
    <property type="entry name" value="tRNA_SAD"/>
</dbReference>
<dbReference type="NCBIfam" id="TIGR00418">
    <property type="entry name" value="thrS"/>
    <property type="match status" value="1"/>
</dbReference>
<dbReference type="PANTHER" id="PTHR11451:SF44">
    <property type="entry name" value="THREONINE--TRNA LIGASE, CHLOROPLASTIC_MITOCHONDRIAL 2"/>
    <property type="match status" value="1"/>
</dbReference>
<dbReference type="PANTHER" id="PTHR11451">
    <property type="entry name" value="THREONINE-TRNA LIGASE"/>
    <property type="match status" value="1"/>
</dbReference>
<dbReference type="Pfam" id="PF03129">
    <property type="entry name" value="HGTP_anticodon"/>
    <property type="match status" value="1"/>
</dbReference>
<dbReference type="Pfam" id="PF02824">
    <property type="entry name" value="TGS"/>
    <property type="match status" value="1"/>
</dbReference>
<dbReference type="Pfam" id="PF00587">
    <property type="entry name" value="tRNA-synt_2b"/>
    <property type="match status" value="1"/>
</dbReference>
<dbReference type="Pfam" id="PF07973">
    <property type="entry name" value="tRNA_SAD"/>
    <property type="match status" value="1"/>
</dbReference>
<dbReference type="PRINTS" id="PR01047">
    <property type="entry name" value="TRNASYNTHTHR"/>
</dbReference>
<dbReference type="SMART" id="SM00863">
    <property type="entry name" value="tRNA_SAD"/>
    <property type="match status" value="1"/>
</dbReference>
<dbReference type="SUPFAM" id="SSF52954">
    <property type="entry name" value="Class II aaRS ABD-related"/>
    <property type="match status" value="1"/>
</dbReference>
<dbReference type="SUPFAM" id="SSF55681">
    <property type="entry name" value="Class II aaRS and biotin synthetases"/>
    <property type="match status" value="1"/>
</dbReference>
<dbReference type="SUPFAM" id="SSF81271">
    <property type="entry name" value="TGS-like"/>
    <property type="match status" value="1"/>
</dbReference>
<dbReference type="SUPFAM" id="SSF55186">
    <property type="entry name" value="ThrRS/AlaRS common domain"/>
    <property type="match status" value="1"/>
</dbReference>
<dbReference type="PROSITE" id="PS50862">
    <property type="entry name" value="AA_TRNA_LIGASE_II"/>
    <property type="match status" value="1"/>
</dbReference>
<dbReference type="PROSITE" id="PS51880">
    <property type="entry name" value="TGS"/>
    <property type="match status" value="1"/>
</dbReference>
<evidence type="ECO:0000255" key="1">
    <source>
        <dbReference type="HAMAP-Rule" id="MF_00184"/>
    </source>
</evidence>
<evidence type="ECO:0000255" key="2">
    <source>
        <dbReference type="PROSITE-ProRule" id="PRU01228"/>
    </source>
</evidence>
<keyword id="KW-0030">Aminoacyl-tRNA synthetase</keyword>
<keyword id="KW-0067">ATP-binding</keyword>
<keyword id="KW-0963">Cytoplasm</keyword>
<keyword id="KW-0436">Ligase</keyword>
<keyword id="KW-0479">Metal-binding</keyword>
<keyword id="KW-0547">Nucleotide-binding</keyword>
<keyword id="KW-0648">Protein biosynthesis</keyword>
<keyword id="KW-0694">RNA-binding</keyword>
<keyword id="KW-0820">tRNA-binding</keyword>
<keyword id="KW-0862">Zinc</keyword>
<proteinExistence type="inferred from homology"/>
<name>SYT_BORPD</name>
<feature type="chain" id="PRO_1000098545" description="Threonine--tRNA ligase">
    <location>
        <begin position="1"/>
        <end position="650"/>
    </location>
</feature>
<feature type="domain" description="TGS" evidence="2">
    <location>
        <begin position="1"/>
        <end position="66"/>
    </location>
</feature>
<feature type="region of interest" description="Catalytic" evidence="1">
    <location>
        <begin position="247"/>
        <end position="538"/>
    </location>
</feature>
<feature type="binding site" evidence="1">
    <location>
        <position position="338"/>
    </location>
    <ligand>
        <name>Zn(2+)</name>
        <dbReference type="ChEBI" id="CHEBI:29105"/>
    </ligand>
</feature>
<feature type="binding site" evidence="1">
    <location>
        <position position="389"/>
    </location>
    <ligand>
        <name>Zn(2+)</name>
        <dbReference type="ChEBI" id="CHEBI:29105"/>
    </ligand>
</feature>
<feature type="binding site" evidence="1">
    <location>
        <position position="515"/>
    </location>
    <ligand>
        <name>Zn(2+)</name>
        <dbReference type="ChEBI" id="CHEBI:29105"/>
    </ligand>
</feature>
<accession>A9IRH6</accession>